<keyword id="KW-0963">Cytoplasm</keyword>
<keyword id="KW-0413">Isomerase</keyword>
<keyword id="KW-1185">Reference proteome</keyword>
<keyword id="KW-0697">Rotamase</keyword>
<protein>
    <recommendedName>
        <fullName>Serine/threonine-protein phosphatase 2A activator 2</fullName>
        <ecNumber>5.2.1.8</ecNumber>
    </recommendedName>
    <alternativeName>
        <fullName>Peptidyl-prolyl cis-trans isomerase PTPA-2</fullName>
        <shortName>PPIase PTPA-2</shortName>
        <shortName>Rotamase PTPA-2</shortName>
    </alternativeName>
    <alternativeName>
        <fullName>Phosphotyrosyl phosphatase activator 2</fullName>
    </alternativeName>
</protein>
<organism>
    <name type="scientific">Candida albicans (strain SC5314 / ATCC MYA-2876)</name>
    <name type="common">Yeast</name>
    <dbReference type="NCBI Taxonomy" id="237561"/>
    <lineage>
        <taxon>Eukaryota</taxon>
        <taxon>Fungi</taxon>
        <taxon>Dikarya</taxon>
        <taxon>Ascomycota</taxon>
        <taxon>Saccharomycotina</taxon>
        <taxon>Pichiomycetes</taxon>
        <taxon>Debaryomycetaceae</taxon>
        <taxon>Candida/Lodderomyces clade</taxon>
        <taxon>Candida</taxon>
    </lineage>
</organism>
<comment type="function">
    <text evidence="1">PPIases accelerate the folding of proteins. It catalyzes the cis-trans isomerization of proline imidic peptide bonds in oligopeptides. Acts as a regulatory subunit for PP2A-like phosphatases modulating their activity or substrate specificity, probably by inducing a conformational change in the catalytic subunit, a direct target of the PPIase. Can reactivate inactive phosphatase PP2A-phosphatase methylesterase complexes (PP2Ai) in presence of ATP and Mg(2+) by dissociating the inactive form from the complex (By similarity).</text>
</comment>
<comment type="catalytic activity">
    <reaction>
        <text>[protein]-peptidylproline (omega=180) = [protein]-peptidylproline (omega=0)</text>
        <dbReference type="Rhea" id="RHEA:16237"/>
        <dbReference type="Rhea" id="RHEA-COMP:10747"/>
        <dbReference type="Rhea" id="RHEA-COMP:10748"/>
        <dbReference type="ChEBI" id="CHEBI:83833"/>
        <dbReference type="ChEBI" id="CHEBI:83834"/>
        <dbReference type="EC" id="5.2.1.8"/>
    </reaction>
</comment>
<comment type="subcellular location">
    <subcellularLocation>
        <location evidence="1">Cytoplasm</location>
    </subcellularLocation>
</comment>
<comment type="similarity">
    <text evidence="2">Belongs to the PTPA-type PPIase family.</text>
</comment>
<evidence type="ECO:0000250" key="1"/>
<evidence type="ECO:0000305" key="2"/>
<sequence>MSYITPTKRIFTPEDLSKWVGSPTYNTVLDFIVELQSSVTGKSNDSSYETSSIIDKLSKLLSKVDNLITLHPAHDSVSRFGKIEFRDFYSDLSSKAEEYISEITATAIQETSAYFIESWGNSTRIDYGSGHELNFICFLLCLKELGQITSADYEGLVLKVFTQYMSIMRKLQKEYWLEPAGSHGVWGLDDYHFLPFLFGAAQLSTHPHMKPKSIHNDELVEMYSTKYMYFECINFINKIKTIPNHQGKLSLRWHSPMLDDISAAKNWDKIREGMVKMYKVEVLGKLPIMQHFMFGSLLKCPEGIPEHTDENGHGENPEDHCGHAHVNTWGDCCGIKIPSGIAASESLKHERKGNIPFD</sequence>
<accession>Q59ST6</accession>
<accession>A0A1D8PJX5</accession>
<reference key="1">
    <citation type="journal article" date="2004" name="Proc. Natl. Acad. Sci. U.S.A.">
        <title>The diploid genome sequence of Candida albicans.</title>
        <authorList>
            <person name="Jones T."/>
            <person name="Federspiel N.A."/>
            <person name="Chibana H."/>
            <person name="Dungan J."/>
            <person name="Kalman S."/>
            <person name="Magee B.B."/>
            <person name="Newport G."/>
            <person name="Thorstenson Y.R."/>
            <person name="Agabian N."/>
            <person name="Magee P.T."/>
            <person name="Davis R.W."/>
            <person name="Scherer S."/>
        </authorList>
    </citation>
    <scope>NUCLEOTIDE SEQUENCE [LARGE SCALE GENOMIC DNA]</scope>
    <source>
        <strain>SC5314 / ATCC MYA-2876</strain>
    </source>
</reference>
<reference key="2">
    <citation type="journal article" date="2007" name="Genome Biol.">
        <title>Assembly of the Candida albicans genome into sixteen supercontigs aligned on the eight chromosomes.</title>
        <authorList>
            <person name="van het Hoog M."/>
            <person name="Rast T.J."/>
            <person name="Martchenko M."/>
            <person name="Grindle S."/>
            <person name="Dignard D."/>
            <person name="Hogues H."/>
            <person name="Cuomo C."/>
            <person name="Berriman M."/>
            <person name="Scherer S."/>
            <person name="Magee B.B."/>
            <person name="Whiteway M."/>
            <person name="Chibana H."/>
            <person name="Nantel A."/>
            <person name="Magee P.T."/>
        </authorList>
    </citation>
    <scope>GENOME REANNOTATION</scope>
    <source>
        <strain>SC5314 / ATCC MYA-2876</strain>
    </source>
</reference>
<reference key="3">
    <citation type="journal article" date="2013" name="Genome Biol.">
        <title>Assembly of a phased diploid Candida albicans genome facilitates allele-specific measurements and provides a simple model for repeat and indel structure.</title>
        <authorList>
            <person name="Muzzey D."/>
            <person name="Schwartz K."/>
            <person name="Weissman J.S."/>
            <person name="Sherlock G."/>
        </authorList>
    </citation>
    <scope>NUCLEOTIDE SEQUENCE [LARGE SCALE GENOMIC DNA]</scope>
    <scope>GENOME REANNOTATION</scope>
    <source>
        <strain>SC5314 / ATCC MYA-2876</strain>
    </source>
</reference>
<dbReference type="EC" id="5.2.1.8"/>
<dbReference type="EMBL" id="CP017625">
    <property type="protein sequence ID" value="AOW28410.1"/>
    <property type="molecule type" value="Genomic_DNA"/>
</dbReference>
<dbReference type="RefSeq" id="XP_712734.1">
    <property type="nucleotide sequence ID" value="XM_707641.1"/>
</dbReference>
<dbReference type="SMR" id="Q59ST6"/>
<dbReference type="FunCoup" id="Q59ST6">
    <property type="interactions" value="556"/>
</dbReference>
<dbReference type="STRING" id="237561.Q59ST6"/>
<dbReference type="EnsemblFungi" id="C3_03830W_A-T">
    <property type="protein sequence ID" value="C3_03830W_A-T-p1"/>
    <property type="gene ID" value="C3_03830W_A"/>
</dbReference>
<dbReference type="GeneID" id="3645630"/>
<dbReference type="KEGG" id="cal:CAALFM_C303830WA"/>
<dbReference type="CGD" id="CAL0000193039">
    <property type="gene designation" value="orf19.14195"/>
</dbReference>
<dbReference type="VEuPathDB" id="FungiDB:C3_03830W_A"/>
<dbReference type="eggNOG" id="KOG2867">
    <property type="taxonomic scope" value="Eukaryota"/>
</dbReference>
<dbReference type="HOGENOM" id="CLU_030733_0_0_1"/>
<dbReference type="InParanoid" id="Q59ST6"/>
<dbReference type="OMA" id="SWIKINA"/>
<dbReference type="OrthoDB" id="16120at2759"/>
<dbReference type="PRO" id="PR:Q59ST6"/>
<dbReference type="Proteomes" id="UP000000559">
    <property type="component" value="Chromosome 3"/>
</dbReference>
<dbReference type="GO" id="GO:0005737">
    <property type="term" value="C:cytoplasm"/>
    <property type="evidence" value="ECO:0000318"/>
    <property type="project" value="GO_Central"/>
</dbReference>
<dbReference type="GO" id="GO:0005634">
    <property type="term" value="C:nucleus"/>
    <property type="evidence" value="ECO:0000318"/>
    <property type="project" value="GO_Central"/>
</dbReference>
<dbReference type="GO" id="GO:0000159">
    <property type="term" value="C:protein phosphatase type 2A complex"/>
    <property type="evidence" value="ECO:0000318"/>
    <property type="project" value="GO_Central"/>
</dbReference>
<dbReference type="GO" id="GO:0003755">
    <property type="term" value="F:peptidyl-prolyl cis-trans isomerase activity"/>
    <property type="evidence" value="ECO:0000318"/>
    <property type="project" value="GO_Central"/>
</dbReference>
<dbReference type="GO" id="GO:0008160">
    <property type="term" value="F:protein tyrosine phosphatase activator activity"/>
    <property type="evidence" value="ECO:0000318"/>
    <property type="project" value="GO_Central"/>
</dbReference>
<dbReference type="GO" id="GO:0007052">
    <property type="term" value="P:mitotic spindle organization"/>
    <property type="evidence" value="ECO:0000318"/>
    <property type="project" value="GO_Central"/>
</dbReference>
<dbReference type="GO" id="GO:0006970">
    <property type="term" value="P:response to osmotic stress"/>
    <property type="evidence" value="ECO:0007669"/>
    <property type="project" value="EnsemblFungi"/>
</dbReference>
<dbReference type="CDD" id="cd04087">
    <property type="entry name" value="PTPA"/>
    <property type="match status" value="1"/>
</dbReference>
<dbReference type="FunFam" id="1.20.120.1150:FF:000002">
    <property type="entry name" value="Serine/threonine-protein phosphatase 2A activator"/>
    <property type="match status" value="1"/>
</dbReference>
<dbReference type="Gene3D" id="1.20.120.1150">
    <property type="match status" value="1"/>
</dbReference>
<dbReference type="InterPro" id="IPR004327">
    <property type="entry name" value="Phstyr_phstse_ac"/>
</dbReference>
<dbReference type="InterPro" id="IPR043170">
    <property type="entry name" value="PTPA_C_lid"/>
</dbReference>
<dbReference type="InterPro" id="IPR037218">
    <property type="entry name" value="PTPA_sf"/>
</dbReference>
<dbReference type="PANTHER" id="PTHR10012">
    <property type="entry name" value="SERINE/THREONINE-PROTEIN PHOSPHATASE 2A REGULATORY SUBUNIT B"/>
    <property type="match status" value="1"/>
</dbReference>
<dbReference type="PANTHER" id="PTHR10012:SF5">
    <property type="entry name" value="SERINE_THREONINE-PROTEIN PHOSPHATASE 2A ACTIVATOR 2"/>
    <property type="match status" value="1"/>
</dbReference>
<dbReference type="Pfam" id="PF03095">
    <property type="entry name" value="PTPA"/>
    <property type="match status" value="1"/>
</dbReference>
<dbReference type="PIRSF" id="PIRSF016325">
    <property type="entry name" value="Phstyr_phstse_ac"/>
    <property type="match status" value="1"/>
</dbReference>
<dbReference type="SUPFAM" id="SSF140984">
    <property type="entry name" value="PTPA-like"/>
    <property type="match status" value="1"/>
</dbReference>
<gene>
    <name type="primary">RRD2</name>
    <name type="ordered locus">CAALFM_C303830WA</name>
    <name type="ORF">CaO19.14195</name>
    <name type="ORF">CaO19.6933</name>
</gene>
<feature type="chain" id="PRO_0000226109" description="Serine/threonine-protein phosphatase 2A activator 2">
    <location>
        <begin position="1"/>
        <end position="358"/>
    </location>
</feature>
<proteinExistence type="inferred from homology"/>
<name>PTPA2_CANAL</name>